<organism>
    <name type="scientific">Escherichia coli (strain UTI89 / UPEC)</name>
    <dbReference type="NCBI Taxonomy" id="364106"/>
    <lineage>
        <taxon>Bacteria</taxon>
        <taxon>Pseudomonadati</taxon>
        <taxon>Pseudomonadota</taxon>
        <taxon>Gammaproteobacteria</taxon>
        <taxon>Enterobacterales</taxon>
        <taxon>Enterobacteriaceae</taxon>
        <taxon>Escherichia</taxon>
    </lineage>
</organism>
<sequence length="81" mass="9635">MTMSLEVFEKLEAKVQQAIDTITLLQMEIEELKEKNNSLSQEVQNAQHQREELERENNHLKEQQNGWQERLQALLGRMEEV</sequence>
<gene>
    <name evidence="1" type="primary">zapB</name>
    <name type="ordered locus">UTI89_C4512</name>
</gene>
<protein>
    <recommendedName>
        <fullName evidence="1">Cell division protein ZapB</fullName>
    </recommendedName>
</protein>
<reference key="1">
    <citation type="journal article" date="2006" name="Proc. Natl. Acad. Sci. U.S.A.">
        <title>Identification of genes subject to positive selection in uropathogenic strains of Escherichia coli: a comparative genomics approach.</title>
        <authorList>
            <person name="Chen S.L."/>
            <person name="Hung C.-S."/>
            <person name="Xu J."/>
            <person name="Reigstad C.S."/>
            <person name="Magrini V."/>
            <person name="Sabo A."/>
            <person name="Blasiar D."/>
            <person name="Bieri T."/>
            <person name="Meyer R.R."/>
            <person name="Ozersky P."/>
            <person name="Armstrong J.R."/>
            <person name="Fulton R.S."/>
            <person name="Latreille J.P."/>
            <person name="Spieth J."/>
            <person name="Hooton T.M."/>
            <person name="Mardis E.R."/>
            <person name="Hultgren S.J."/>
            <person name="Gordon J.I."/>
        </authorList>
    </citation>
    <scope>NUCLEOTIDE SEQUENCE [LARGE SCALE GENOMIC DNA]</scope>
    <source>
        <strain>UTI89 / UPEC</strain>
    </source>
</reference>
<feature type="chain" id="PRO_0000333899" description="Cell division protein ZapB">
    <location>
        <begin position="1"/>
        <end position="81"/>
    </location>
</feature>
<feature type="region of interest" description="Disordered" evidence="2">
    <location>
        <begin position="36"/>
        <end position="67"/>
    </location>
</feature>
<feature type="coiled-coil region" evidence="1">
    <location>
        <begin position="5"/>
        <end position="81"/>
    </location>
</feature>
<feature type="compositionally biased region" description="Polar residues" evidence="2">
    <location>
        <begin position="37"/>
        <end position="47"/>
    </location>
</feature>
<feature type="compositionally biased region" description="Basic and acidic residues" evidence="2">
    <location>
        <begin position="48"/>
        <end position="62"/>
    </location>
</feature>
<feature type="modified residue" description="N6-acetyllysine" evidence="1">
    <location>
        <position position="10"/>
    </location>
</feature>
<accession>Q1R3Z0</accession>
<dbReference type="EMBL" id="CP000243">
    <property type="protein sequence ID" value="ABE09924.1"/>
    <property type="status" value="ALT_INIT"/>
    <property type="molecule type" value="Genomic_DNA"/>
</dbReference>
<dbReference type="RefSeq" id="WP_001296623.1">
    <property type="nucleotide sequence ID" value="NZ_CP064825.1"/>
</dbReference>
<dbReference type="SMR" id="Q1R3Z0"/>
<dbReference type="GeneID" id="93777970"/>
<dbReference type="KEGG" id="eci:UTI89_C4512"/>
<dbReference type="HOGENOM" id="CLU_171174_2_0_6"/>
<dbReference type="Proteomes" id="UP000001952">
    <property type="component" value="Chromosome"/>
</dbReference>
<dbReference type="GO" id="GO:0005737">
    <property type="term" value="C:cytoplasm"/>
    <property type="evidence" value="ECO:0007669"/>
    <property type="project" value="UniProtKB-SubCell"/>
</dbReference>
<dbReference type="GO" id="GO:0000917">
    <property type="term" value="P:division septum assembly"/>
    <property type="evidence" value="ECO:0007669"/>
    <property type="project" value="UniProtKB-KW"/>
</dbReference>
<dbReference type="GO" id="GO:0043093">
    <property type="term" value="P:FtsZ-dependent cytokinesis"/>
    <property type="evidence" value="ECO:0007669"/>
    <property type="project" value="UniProtKB-UniRule"/>
</dbReference>
<dbReference type="FunFam" id="1.20.5.340:FF:000014">
    <property type="entry name" value="Cell division protein ZapB"/>
    <property type="match status" value="1"/>
</dbReference>
<dbReference type="Gene3D" id="1.20.5.340">
    <property type="match status" value="1"/>
</dbReference>
<dbReference type="HAMAP" id="MF_01196">
    <property type="entry name" value="ZapB"/>
    <property type="match status" value="1"/>
</dbReference>
<dbReference type="InterPro" id="IPR009252">
    <property type="entry name" value="Cell_div_ZapB"/>
</dbReference>
<dbReference type="NCBIfam" id="NF011951">
    <property type="entry name" value="PRK15422.1"/>
    <property type="match status" value="1"/>
</dbReference>
<dbReference type="Pfam" id="PF06005">
    <property type="entry name" value="ZapB"/>
    <property type="match status" value="1"/>
</dbReference>
<comment type="function">
    <text evidence="1">Non-essential, abundant cell division factor that is required for proper Z-ring formation. It is recruited early to the divisome by direct interaction with FtsZ, stimulating Z-ring assembly and thereby promoting cell division earlier in the cell cycle. Its recruitment to the Z-ring requires functional FtsA or ZipA.</text>
</comment>
<comment type="subunit">
    <text evidence="1">Homodimer. The ends of the coiled-coil dimer bind to each other, forming polymers. Interacts with FtsZ.</text>
</comment>
<comment type="subcellular location">
    <subcellularLocation>
        <location>Cytoplasm</location>
    </subcellularLocation>
    <text evidence="1">Localizes to the septum at mid-cell, in a FtsZ-like pattern.</text>
</comment>
<comment type="similarity">
    <text evidence="1">Belongs to the ZapB family.</text>
</comment>
<comment type="sequence caution" evidence="3">
    <conflict type="erroneous initiation">
        <sequence resource="EMBL-CDS" id="ABE09924"/>
    </conflict>
</comment>
<keyword id="KW-0007">Acetylation</keyword>
<keyword id="KW-0131">Cell cycle</keyword>
<keyword id="KW-0132">Cell division</keyword>
<keyword id="KW-0175">Coiled coil</keyword>
<keyword id="KW-0963">Cytoplasm</keyword>
<keyword id="KW-0717">Septation</keyword>
<evidence type="ECO:0000255" key="1">
    <source>
        <dbReference type="HAMAP-Rule" id="MF_01196"/>
    </source>
</evidence>
<evidence type="ECO:0000256" key="2">
    <source>
        <dbReference type="SAM" id="MobiDB-lite"/>
    </source>
</evidence>
<evidence type="ECO:0000305" key="3"/>
<proteinExistence type="inferred from homology"/>
<name>ZAPB_ECOUT</name>